<proteinExistence type="inferred from homology"/>
<organism>
    <name type="scientific">Methylorubrum extorquens (strain PA1)</name>
    <name type="common">Methylobacterium extorquens</name>
    <dbReference type="NCBI Taxonomy" id="419610"/>
    <lineage>
        <taxon>Bacteria</taxon>
        <taxon>Pseudomonadati</taxon>
        <taxon>Pseudomonadota</taxon>
        <taxon>Alphaproteobacteria</taxon>
        <taxon>Hyphomicrobiales</taxon>
        <taxon>Methylobacteriaceae</taxon>
        <taxon>Methylorubrum</taxon>
    </lineage>
</organism>
<comment type="function">
    <text evidence="1">Catalyzes the decarboxylative condensation of pimeloyl-[acyl-carrier protein] and L-alanine to produce 8-amino-7-oxononanoate (AON), [acyl-carrier protein], and carbon dioxide.</text>
</comment>
<comment type="catalytic activity">
    <reaction>
        <text>6-carboxyhexanoyl-[ACP] + L-alanine + H(+) = (8S)-8-amino-7-oxononanoate + holo-[ACP] + CO2</text>
        <dbReference type="Rhea" id="RHEA:42288"/>
        <dbReference type="Rhea" id="RHEA-COMP:9685"/>
        <dbReference type="Rhea" id="RHEA-COMP:9955"/>
        <dbReference type="ChEBI" id="CHEBI:15378"/>
        <dbReference type="ChEBI" id="CHEBI:16526"/>
        <dbReference type="ChEBI" id="CHEBI:57972"/>
        <dbReference type="ChEBI" id="CHEBI:64479"/>
        <dbReference type="ChEBI" id="CHEBI:78846"/>
        <dbReference type="ChEBI" id="CHEBI:149468"/>
        <dbReference type="EC" id="2.3.1.47"/>
    </reaction>
</comment>
<comment type="cofactor">
    <cofactor evidence="1">
        <name>pyridoxal 5'-phosphate</name>
        <dbReference type="ChEBI" id="CHEBI:597326"/>
    </cofactor>
</comment>
<comment type="pathway">
    <text>Cofactor biosynthesis; biotin biosynthesis.</text>
</comment>
<comment type="subunit">
    <text evidence="1">Homodimer.</text>
</comment>
<comment type="similarity">
    <text evidence="2">Belongs to the class-II pyridoxal-phosphate-dependent aminotransferase family. BioF subfamily.</text>
</comment>
<evidence type="ECO:0000250" key="1"/>
<evidence type="ECO:0000305" key="2"/>
<name>BIOF_METEP</name>
<gene>
    <name type="ordered locus">Mext_0857</name>
</gene>
<keyword id="KW-0012">Acyltransferase</keyword>
<keyword id="KW-0093">Biotin biosynthesis</keyword>
<keyword id="KW-0663">Pyridoxal phosphate</keyword>
<keyword id="KW-0808">Transferase</keyword>
<sequence length="383" mass="39620">MSPNPSNSLDAFAGEKLAGLEASALRRRLAVTARGPEAAAERGGRSLVSFSCNDYLGLAHDPRVIAAATEALARYGAGAGASRLVTGNSPPLAALEERLARHKGKEAALVFGSGYLANLGIAPALVGAGDLILIDELGHSCLFAGAAMSRAQTVRFAHNDVAQLRTLLAEHRGTARRALILTERVFSMDGDRAPLPEILALAGEYDAWTLVDDAHGLGVVEPGQRAPLEMGTLSKTLGSYGGYLCASQPVIDLLTSRARSLVYTTGLPPASAAAALTALDIVETEPERAARPLALARRFTARLGLPEAMSPIVPVLIGAAEAALALSTALEARGFLVVAIRPPTVAPGTARLRVAFSAAHDEGQVDALAEALIELAPESVRAG</sequence>
<feature type="chain" id="PRO_0000381023" description="8-amino-7-oxononanoate synthase">
    <location>
        <begin position="1"/>
        <end position="383"/>
    </location>
</feature>
<feature type="binding site" evidence="1">
    <location>
        <position position="27"/>
    </location>
    <ligand>
        <name>substrate</name>
    </ligand>
</feature>
<feature type="binding site" evidence="1">
    <location>
        <position position="34"/>
    </location>
    <ligand>
        <name>substrate</name>
    </ligand>
</feature>
<feature type="binding site" evidence="1">
    <location>
        <begin position="114"/>
        <end position="115"/>
    </location>
    <ligand>
        <name>pyridoxal 5'-phosphate</name>
        <dbReference type="ChEBI" id="CHEBI:597326"/>
    </ligand>
</feature>
<feature type="binding site" evidence="1">
    <location>
        <position position="139"/>
    </location>
    <ligand>
        <name>substrate</name>
    </ligand>
</feature>
<feature type="binding site" evidence="1">
    <location>
        <position position="187"/>
    </location>
    <ligand>
        <name>pyridoxal 5'-phosphate</name>
        <dbReference type="ChEBI" id="CHEBI:597326"/>
    </ligand>
</feature>
<feature type="binding site" evidence="1">
    <location>
        <begin position="212"/>
        <end position="215"/>
    </location>
    <ligand>
        <name>pyridoxal 5'-phosphate</name>
        <dbReference type="ChEBI" id="CHEBI:597326"/>
    </ligand>
</feature>
<feature type="binding site" evidence="1">
    <location>
        <begin position="232"/>
        <end position="235"/>
    </location>
    <ligand>
        <name>pyridoxal 5'-phosphate</name>
        <dbReference type="ChEBI" id="CHEBI:597326"/>
    </ligand>
</feature>
<feature type="binding site" evidence="1">
    <location>
        <position position="344"/>
    </location>
    <ligand>
        <name>substrate</name>
    </ligand>
</feature>
<feature type="modified residue" description="N6-(pyridoxal phosphate)lysine" evidence="1">
    <location>
        <position position="235"/>
    </location>
</feature>
<protein>
    <recommendedName>
        <fullName>8-amino-7-oxononanoate synthase</fullName>
        <shortName>AONS</shortName>
        <ecNumber>2.3.1.47</ecNumber>
    </recommendedName>
    <alternativeName>
        <fullName>7-keto-8-amino-pelargonic acid synthase</fullName>
        <shortName>7-KAP synthase</shortName>
        <shortName>KAPA synthase</shortName>
    </alternativeName>
    <alternativeName>
        <fullName>8-amino-7-ketopelargonate synthase</fullName>
    </alternativeName>
    <alternativeName>
        <fullName>Alpha-oxoamine synthase</fullName>
    </alternativeName>
</protein>
<reference key="1">
    <citation type="submission" date="2007-12" db="EMBL/GenBank/DDBJ databases">
        <title>Complete sequence of Methylobacterium extorquens PA1.</title>
        <authorList>
            <consortium name="US DOE Joint Genome Institute"/>
            <person name="Copeland A."/>
            <person name="Lucas S."/>
            <person name="Lapidus A."/>
            <person name="Barry K."/>
            <person name="Glavina del Rio T."/>
            <person name="Dalin E."/>
            <person name="Tice H."/>
            <person name="Pitluck S."/>
            <person name="Saunders E."/>
            <person name="Brettin T."/>
            <person name="Bruce D."/>
            <person name="Detter J.C."/>
            <person name="Han C."/>
            <person name="Schmutz J."/>
            <person name="Larimer F."/>
            <person name="Land M."/>
            <person name="Hauser L."/>
            <person name="Kyrpides N."/>
            <person name="Kim E."/>
            <person name="Marx C."/>
            <person name="Richardson P."/>
        </authorList>
    </citation>
    <scope>NUCLEOTIDE SEQUENCE [LARGE SCALE GENOMIC DNA]</scope>
    <source>
        <strain>PA1</strain>
    </source>
</reference>
<dbReference type="EC" id="2.3.1.47"/>
<dbReference type="EMBL" id="CP000908">
    <property type="protein sequence ID" value="ABY29262.1"/>
    <property type="molecule type" value="Genomic_DNA"/>
</dbReference>
<dbReference type="RefSeq" id="WP_012252578.1">
    <property type="nucleotide sequence ID" value="NC_010172.1"/>
</dbReference>
<dbReference type="SMR" id="A9W106"/>
<dbReference type="KEGG" id="mex:Mext_0857"/>
<dbReference type="eggNOG" id="COG0156">
    <property type="taxonomic scope" value="Bacteria"/>
</dbReference>
<dbReference type="HOGENOM" id="CLU_015846_11_2_5"/>
<dbReference type="BioCyc" id="MEXT419610:MEXT_RS04250-MONOMER"/>
<dbReference type="UniPathway" id="UPA00078"/>
<dbReference type="GO" id="GO:0008710">
    <property type="term" value="F:8-amino-7-oxononanoate synthase activity"/>
    <property type="evidence" value="ECO:0007669"/>
    <property type="project" value="UniProtKB-EC"/>
</dbReference>
<dbReference type="GO" id="GO:0030170">
    <property type="term" value="F:pyridoxal phosphate binding"/>
    <property type="evidence" value="ECO:0007669"/>
    <property type="project" value="InterPro"/>
</dbReference>
<dbReference type="GO" id="GO:0009102">
    <property type="term" value="P:biotin biosynthetic process"/>
    <property type="evidence" value="ECO:0007669"/>
    <property type="project" value="UniProtKB-UniPathway"/>
</dbReference>
<dbReference type="Gene3D" id="3.90.1150.10">
    <property type="entry name" value="Aspartate Aminotransferase, domain 1"/>
    <property type="match status" value="1"/>
</dbReference>
<dbReference type="Gene3D" id="3.40.640.10">
    <property type="entry name" value="Type I PLP-dependent aspartate aminotransferase-like (Major domain)"/>
    <property type="match status" value="1"/>
</dbReference>
<dbReference type="InterPro" id="IPR004839">
    <property type="entry name" value="Aminotransferase_I/II_large"/>
</dbReference>
<dbReference type="InterPro" id="IPR050087">
    <property type="entry name" value="AON_synthase_class-II"/>
</dbReference>
<dbReference type="InterPro" id="IPR015424">
    <property type="entry name" value="PyrdxlP-dep_Trfase"/>
</dbReference>
<dbReference type="InterPro" id="IPR015421">
    <property type="entry name" value="PyrdxlP-dep_Trfase_major"/>
</dbReference>
<dbReference type="InterPro" id="IPR015422">
    <property type="entry name" value="PyrdxlP-dep_Trfase_small"/>
</dbReference>
<dbReference type="PANTHER" id="PTHR13693:SF100">
    <property type="entry name" value="8-AMINO-7-OXONONANOATE SYNTHASE"/>
    <property type="match status" value="1"/>
</dbReference>
<dbReference type="PANTHER" id="PTHR13693">
    <property type="entry name" value="CLASS II AMINOTRANSFERASE/8-AMINO-7-OXONONANOATE SYNTHASE"/>
    <property type="match status" value="1"/>
</dbReference>
<dbReference type="Pfam" id="PF00155">
    <property type="entry name" value="Aminotran_1_2"/>
    <property type="match status" value="1"/>
</dbReference>
<dbReference type="SUPFAM" id="SSF53383">
    <property type="entry name" value="PLP-dependent transferases"/>
    <property type="match status" value="1"/>
</dbReference>
<accession>A9W106</accession>